<dbReference type="EC" id="2.7.11.30"/>
<dbReference type="EMBL" id="U38622">
    <property type="protein sequence ID" value="AAC98806.1"/>
    <property type="molecule type" value="mRNA"/>
</dbReference>
<dbReference type="EMBL" id="AJ318064">
    <property type="protein sequence ID" value="CAC39433.1"/>
    <property type="molecule type" value="mRNA"/>
</dbReference>
<dbReference type="RefSeq" id="NP_989891.1">
    <property type="nucleotide sequence ID" value="NM_204560.1"/>
</dbReference>
<dbReference type="RefSeq" id="XP_015145616.1">
    <property type="nucleotide sequence ID" value="XM_015290130.1"/>
</dbReference>
<dbReference type="RefSeq" id="XP_015145617.1">
    <property type="nucleotide sequence ID" value="XM_015290131.1"/>
</dbReference>
<dbReference type="RefSeq" id="XP_015145618.1">
    <property type="nucleotide sequence ID" value="XM_015290132.1"/>
</dbReference>
<dbReference type="RefSeq" id="XP_015145619.1">
    <property type="nucleotide sequence ID" value="XM_015290133.1"/>
</dbReference>
<dbReference type="RefSeq" id="XP_015145620.1">
    <property type="nucleotide sequence ID" value="XM_015290134.1"/>
</dbReference>
<dbReference type="SMR" id="Q90ZK6"/>
<dbReference type="FunCoup" id="Q90ZK6">
    <property type="interactions" value="1366"/>
</dbReference>
<dbReference type="STRING" id="9031.ENSGALP00000046833"/>
<dbReference type="GlyCosmos" id="Q90ZK6">
    <property type="glycosylation" value="1 site, No reported glycans"/>
</dbReference>
<dbReference type="GlyGen" id="Q90ZK6">
    <property type="glycosylation" value="1 site"/>
</dbReference>
<dbReference type="PaxDb" id="9031-ENSGALP00000020469"/>
<dbReference type="GeneID" id="395246"/>
<dbReference type="KEGG" id="gga:395246"/>
<dbReference type="CTD" id="395246"/>
<dbReference type="VEuPathDB" id="HostDB:geneid_395246"/>
<dbReference type="eggNOG" id="KOG2052">
    <property type="taxonomic scope" value="Eukaryota"/>
</dbReference>
<dbReference type="HOGENOM" id="CLU_000288_8_5_1"/>
<dbReference type="InParanoid" id="Q90ZK6"/>
<dbReference type="OMA" id="VFERGCI"/>
<dbReference type="OrthoDB" id="69842at2759"/>
<dbReference type="PhylomeDB" id="Q90ZK6"/>
<dbReference type="PRO" id="PR:Q90ZK6"/>
<dbReference type="Proteomes" id="UP000000539">
    <property type="component" value="Unassembled WGS sequence"/>
</dbReference>
<dbReference type="GO" id="GO:0048179">
    <property type="term" value="C:activin receptor complex"/>
    <property type="evidence" value="ECO:0000247"/>
    <property type="project" value="AgBase"/>
</dbReference>
<dbReference type="GO" id="GO:0045177">
    <property type="term" value="C:apical part of cell"/>
    <property type="evidence" value="ECO:0000247"/>
    <property type="project" value="AgBase"/>
</dbReference>
<dbReference type="GO" id="GO:0070724">
    <property type="term" value="C:BMP receptor complex"/>
    <property type="evidence" value="ECO:0000318"/>
    <property type="project" value="GO_Central"/>
</dbReference>
<dbReference type="GO" id="GO:0016020">
    <property type="term" value="C:membrane"/>
    <property type="evidence" value="ECO:0000305"/>
    <property type="project" value="AgBase"/>
</dbReference>
<dbReference type="GO" id="GO:0005886">
    <property type="term" value="C:plasma membrane"/>
    <property type="evidence" value="ECO:0000247"/>
    <property type="project" value="AgBase"/>
</dbReference>
<dbReference type="GO" id="GO:0048185">
    <property type="term" value="F:activin binding"/>
    <property type="evidence" value="ECO:0000247"/>
    <property type="project" value="AgBase"/>
</dbReference>
<dbReference type="GO" id="GO:0016361">
    <property type="term" value="F:activin receptor activity, type I"/>
    <property type="evidence" value="ECO:0000247"/>
    <property type="project" value="AgBase"/>
</dbReference>
<dbReference type="GO" id="GO:0005524">
    <property type="term" value="F:ATP binding"/>
    <property type="evidence" value="ECO:0000247"/>
    <property type="project" value="AgBase"/>
</dbReference>
<dbReference type="GO" id="GO:0019838">
    <property type="term" value="F:growth factor binding"/>
    <property type="evidence" value="ECO:0000247"/>
    <property type="project" value="AgBase"/>
</dbReference>
<dbReference type="GO" id="GO:0046872">
    <property type="term" value="F:metal ion binding"/>
    <property type="evidence" value="ECO:0007669"/>
    <property type="project" value="UniProtKB-KW"/>
</dbReference>
<dbReference type="GO" id="GO:0042803">
    <property type="term" value="F:protein homodimerization activity"/>
    <property type="evidence" value="ECO:0000247"/>
    <property type="project" value="AgBase"/>
</dbReference>
<dbReference type="GO" id="GO:0004672">
    <property type="term" value="F:protein kinase activity"/>
    <property type="evidence" value="ECO:0000247"/>
    <property type="project" value="AgBase"/>
</dbReference>
<dbReference type="GO" id="GO:0004674">
    <property type="term" value="F:protein serine/threonine kinase activity"/>
    <property type="evidence" value="ECO:0000247"/>
    <property type="project" value="AgBase"/>
</dbReference>
<dbReference type="GO" id="GO:0046332">
    <property type="term" value="F:SMAD binding"/>
    <property type="evidence" value="ECO:0000247"/>
    <property type="project" value="AgBase"/>
</dbReference>
<dbReference type="GO" id="GO:0050431">
    <property type="term" value="F:transforming growth factor beta binding"/>
    <property type="evidence" value="ECO:0000353"/>
    <property type="project" value="AgBase"/>
</dbReference>
<dbReference type="GO" id="GO:0005025">
    <property type="term" value="F:transforming growth factor beta receptor activity, type I"/>
    <property type="evidence" value="ECO:0000314"/>
    <property type="project" value="AgBase"/>
</dbReference>
<dbReference type="GO" id="GO:0032924">
    <property type="term" value="P:activin receptor signaling pathway"/>
    <property type="evidence" value="ECO:0000314"/>
    <property type="project" value="AgBase"/>
</dbReference>
<dbReference type="GO" id="GO:0002526">
    <property type="term" value="P:acute inflammatory response"/>
    <property type="evidence" value="ECO:0000247"/>
    <property type="project" value="AgBase"/>
</dbReference>
<dbReference type="GO" id="GO:0003289">
    <property type="term" value="P:atrial septum primum morphogenesis"/>
    <property type="evidence" value="ECO:0000247"/>
    <property type="project" value="AgBase"/>
</dbReference>
<dbReference type="GO" id="GO:0003181">
    <property type="term" value="P:atrioventricular valve morphogenesis"/>
    <property type="evidence" value="ECO:0000250"/>
    <property type="project" value="AgBase"/>
</dbReference>
<dbReference type="GO" id="GO:0030509">
    <property type="term" value="P:BMP signaling pathway"/>
    <property type="evidence" value="ECO:0000247"/>
    <property type="project" value="AgBase"/>
</dbReference>
<dbReference type="GO" id="GO:0001569">
    <property type="term" value="P:branching involved in blood vessel morphogenesis"/>
    <property type="evidence" value="ECO:0000247"/>
    <property type="project" value="AgBase"/>
</dbReference>
<dbReference type="GO" id="GO:0060317">
    <property type="term" value="P:cardiac epithelial to mesenchymal transition"/>
    <property type="evidence" value="ECO:0000315"/>
    <property type="project" value="AgBase"/>
</dbReference>
<dbReference type="GO" id="GO:0060923">
    <property type="term" value="P:cardiac muscle cell fate commitment"/>
    <property type="evidence" value="ECO:0000247"/>
    <property type="project" value="AgBase"/>
</dbReference>
<dbReference type="GO" id="GO:0030154">
    <property type="term" value="P:cell differentiation"/>
    <property type="evidence" value="ECO:0000318"/>
    <property type="project" value="GO_Central"/>
</dbReference>
<dbReference type="GO" id="GO:0016477">
    <property type="term" value="P:cell migration"/>
    <property type="evidence" value="ECO:0000315"/>
    <property type="project" value="AgBase"/>
</dbReference>
<dbReference type="GO" id="GO:0071773">
    <property type="term" value="P:cellular response to BMP stimulus"/>
    <property type="evidence" value="ECO:0000247"/>
    <property type="project" value="AgBase"/>
</dbReference>
<dbReference type="GO" id="GO:0071363">
    <property type="term" value="P:cellular response to growth factor stimulus"/>
    <property type="evidence" value="ECO:0000318"/>
    <property type="project" value="GO_Central"/>
</dbReference>
<dbReference type="GO" id="GO:0007368">
    <property type="term" value="P:determination of left/right symmetry"/>
    <property type="evidence" value="ECO:0000247"/>
    <property type="project" value="AgBase"/>
</dbReference>
<dbReference type="GO" id="GO:0009953">
    <property type="term" value="P:dorsal/ventral pattern formation"/>
    <property type="evidence" value="ECO:0000318"/>
    <property type="project" value="GO_Central"/>
</dbReference>
<dbReference type="GO" id="GO:0003143">
    <property type="term" value="P:embryonic heart tube morphogenesis"/>
    <property type="evidence" value="ECO:0000247"/>
    <property type="project" value="AgBase"/>
</dbReference>
<dbReference type="GO" id="GO:0061445">
    <property type="term" value="P:endocardial cushion cell fate commitment"/>
    <property type="evidence" value="ECO:0000247"/>
    <property type="project" value="AgBase"/>
</dbReference>
<dbReference type="GO" id="GO:0003272">
    <property type="term" value="P:endocardial cushion formation"/>
    <property type="evidence" value="ECO:0000250"/>
    <property type="project" value="AgBase"/>
</dbReference>
<dbReference type="GO" id="GO:0003274">
    <property type="term" value="P:endocardial cushion fusion"/>
    <property type="evidence" value="ECO:0000250"/>
    <property type="project" value="AgBase"/>
</dbReference>
<dbReference type="GO" id="GO:0042118">
    <property type="term" value="P:endothelial cell activation"/>
    <property type="evidence" value="ECO:0000315"/>
    <property type="project" value="AgBase"/>
</dbReference>
<dbReference type="GO" id="GO:0000082">
    <property type="term" value="P:G1/S transition of mitotic cell cycle"/>
    <property type="evidence" value="ECO:0000247"/>
    <property type="project" value="AgBase"/>
</dbReference>
<dbReference type="GO" id="GO:0007369">
    <property type="term" value="P:gastrulation"/>
    <property type="evidence" value="ECO:0000247"/>
    <property type="project" value="AgBase"/>
</dbReference>
<dbReference type="GO" id="GO:0001702">
    <property type="term" value="P:gastrulation with mouth forming second"/>
    <property type="evidence" value="ECO:0000247"/>
    <property type="project" value="AgBase"/>
</dbReference>
<dbReference type="GO" id="GO:0007281">
    <property type="term" value="P:germ cell development"/>
    <property type="evidence" value="ECO:0000247"/>
    <property type="project" value="AgBase"/>
</dbReference>
<dbReference type="GO" id="GO:0007507">
    <property type="term" value="P:heart development"/>
    <property type="evidence" value="ECO:0000315"/>
    <property type="project" value="AgBase"/>
</dbReference>
<dbReference type="GO" id="GO:0035556">
    <property type="term" value="P:intracellular signal transduction"/>
    <property type="evidence" value="ECO:0000314"/>
    <property type="project" value="AgBase"/>
</dbReference>
<dbReference type="GO" id="GO:0048762">
    <property type="term" value="P:mesenchymal cell differentiation"/>
    <property type="evidence" value="ECO:0000315"/>
    <property type="project" value="AgBase"/>
</dbReference>
<dbReference type="GO" id="GO:0007498">
    <property type="term" value="P:mesoderm development"/>
    <property type="evidence" value="ECO:0000247"/>
    <property type="project" value="AgBase"/>
</dbReference>
<dbReference type="GO" id="GO:0001707">
    <property type="term" value="P:mesoderm formation"/>
    <property type="evidence" value="ECO:0000247"/>
    <property type="project" value="AgBase"/>
</dbReference>
<dbReference type="GO" id="GO:0003183">
    <property type="term" value="P:mitral valve morphogenesis"/>
    <property type="evidence" value="ECO:0000247"/>
    <property type="project" value="AgBase"/>
</dbReference>
<dbReference type="GO" id="GO:0032926">
    <property type="term" value="P:negative regulation of activin receptor signaling pathway"/>
    <property type="evidence" value="ECO:0000247"/>
    <property type="project" value="AgBase"/>
</dbReference>
<dbReference type="GO" id="GO:2001237">
    <property type="term" value="P:negative regulation of extrinsic apoptotic signaling pathway"/>
    <property type="evidence" value="ECO:0000247"/>
    <property type="project" value="AgBase"/>
</dbReference>
<dbReference type="GO" id="GO:0009968">
    <property type="term" value="P:negative regulation of signal transduction"/>
    <property type="evidence" value="ECO:0000247"/>
    <property type="project" value="AgBase"/>
</dbReference>
<dbReference type="GO" id="GO:0001755">
    <property type="term" value="P:neural crest cell migration"/>
    <property type="evidence" value="ECO:0000247"/>
    <property type="project" value="AgBase"/>
</dbReference>
<dbReference type="GO" id="GO:0018107">
    <property type="term" value="P:peptidyl-threonine phosphorylation"/>
    <property type="evidence" value="ECO:0000247"/>
    <property type="project" value="AgBase"/>
</dbReference>
<dbReference type="GO" id="GO:0060037">
    <property type="term" value="P:pharyngeal system development"/>
    <property type="evidence" value="ECO:0000247"/>
    <property type="project" value="AgBase"/>
</dbReference>
<dbReference type="GO" id="GO:0010694">
    <property type="term" value="P:positive regulation of alkaline phosphatase activity"/>
    <property type="evidence" value="ECO:0000315"/>
    <property type="project" value="AgBase"/>
</dbReference>
<dbReference type="GO" id="GO:0030513">
    <property type="term" value="P:positive regulation of BMP signaling pathway"/>
    <property type="evidence" value="ECO:0000314"/>
    <property type="project" value="AgBase"/>
</dbReference>
<dbReference type="GO" id="GO:0030501">
    <property type="term" value="P:positive regulation of bone mineralization"/>
    <property type="evidence" value="ECO:0000247"/>
    <property type="project" value="AgBase"/>
</dbReference>
<dbReference type="GO" id="GO:0062043">
    <property type="term" value="P:positive regulation of cardiac epithelial to mesenchymal transition"/>
    <property type="evidence" value="ECO:0000250"/>
    <property type="project" value="AgBase"/>
</dbReference>
<dbReference type="GO" id="GO:0030335">
    <property type="term" value="P:positive regulation of cell migration"/>
    <property type="evidence" value="ECO:0000247"/>
    <property type="project" value="AgBase"/>
</dbReference>
<dbReference type="GO" id="GO:2000017">
    <property type="term" value="P:positive regulation of determination of dorsal identity"/>
    <property type="evidence" value="ECO:0000247"/>
    <property type="project" value="AgBase"/>
</dbReference>
<dbReference type="GO" id="GO:0045893">
    <property type="term" value="P:positive regulation of DNA-templated transcription"/>
    <property type="evidence" value="ECO:0000315"/>
    <property type="project" value="AgBase"/>
</dbReference>
<dbReference type="GO" id="GO:0010718">
    <property type="term" value="P:positive regulation of epithelial to mesenchymal transition"/>
    <property type="evidence" value="ECO:0000315"/>
    <property type="project" value="AgBase"/>
</dbReference>
<dbReference type="GO" id="GO:0045669">
    <property type="term" value="P:positive regulation of osteoblast differentiation"/>
    <property type="evidence" value="ECO:0000247"/>
    <property type="project" value="AgBase"/>
</dbReference>
<dbReference type="GO" id="GO:0045944">
    <property type="term" value="P:positive regulation of transcription by RNA polymerase II"/>
    <property type="evidence" value="ECO:0000247"/>
    <property type="project" value="AgBase"/>
</dbReference>
<dbReference type="GO" id="GO:0006468">
    <property type="term" value="P:protein phosphorylation"/>
    <property type="evidence" value="ECO:0000247"/>
    <property type="project" value="AgBase"/>
</dbReference>
<dbReference type="GO" id="GO:0030278">
    <property type="term" value="P:regulation of ossification"/>
    <property type="evidence" value="ECO:0000247"/>
    <property type="project" value="AgBase"/>
</dbReference>
<dbReference type="GO" id="GO:0051145">
    <property type="term" value="P:smooth muscle cell differentiation"/>
    <property type="evidence" value="ECO:0000247"/>
    <property type="project" value="AgBase"/>
</dbReference>
<dbReference type="GO" id="GO:0007179">
    <property type="term" value="P:transforming growth factor beta receptor signaling pathway"/>
    <property type="evidence" value="ECO:0000314"/>
    <property type="project" value="AgBase"/>
</dbReference>
<dbReference type="GO" id="GO:0060412">
    <property type="term" value="P:ventricular septum morphogenesis"/>
    <property type="evidence" value="ECO:0000250"/>
    <property type="project" value="AgBase"/>
</dbReference>
<dbReference type="CDD" id="cd14142">
    <property type="entry name" value="STKc_ACVR1_ALK1"/>
    <property type="match status" value="1"/>
</dbReference>
<dbReference type="CDD" id="cd23535">
    <property type="entry name" value="TFP_LU_ECD_ALK2"/>
    <property type="match status" value="1"/>
</dbReference>
<dbReference type="FunFam" id="1.10.510.10:FF:000018">
    <property type="entry name" value="Receptor protein serine/threonine kinase"/>
    <property type="match status" value="1"/>
</dbReference>
<dbReference type="FunFam" id="3.30.200.20:FF:000064">
    <property type="entry name" value="Receptor protein serine/threonine kinase"/>
    <property type="match status" value="1"/>
</dbReference>
<dbReference type="FunFam" id="2.10.60.10:FF:000008">
    <property type="entry name" value="Serine/threonine-protein kinase receptor"/>
    <property type="match status" value="1"/>
</dbReference>
<dbReference type="Gene3D" id="2.10.60.10">
    <property type="entry name" value="CD59"/>
    <property type="match status" value="1"/>
</dbReference>
<dbReference type="Gene3D" id="3.30.200.20">
    <property type="entry name" value="Phosphorylase Kinase, domain 1"/>
    <property type="match status" value="1"/>
</dbReference>
<dbReference type="Gene3D" id="1.10.510.10">
    <property type="entry name" value="Transferase(Phosphotransferase) domain 1"/>
    <property type="match status" value="1"/>
</dbReference>
<dbReference type="InterPro" id="IPR000472">
    <property type="entry name" value="Activin_recp"/>
</dbReference>
<dbReference type="InterPro" id="IPR003605">
    <property type="entry name" value="GS_dom"/>
</dbReference>
<dbReference type="InterPro" id="IPR011009">
    <property type="entry name" value="Kinase-like_dom_sf"/>
</dbReference>
<dbReference type="InterPro" id="IPR000719">
    <property type="entry name" value="Prot_kinase_dom"/>
</dbReference>
<dbReference type="InterPro" id="IPR017441">
    <property type="entry name" value="Protein_kinase_ATP_BS"/>
</dbReference>
<dbReference type="InterPro" id="IPR001245">
    <property type="entry name" value="Ser-Thr/Tyr_kinase_cat_dom"/>
</dbReference>
<dbReference type="InterPro" id="IPR008271">
    <property type="entry name" value="Ser/Thr_kinase_AS"/>
</dbReference>
<dbReference type="InterPro" id="IPR045860">
    <property type="entry name" value="Snake_toxin-like_sf"/>
</dbReference>
<dbReference type="InterPro" id="IPR000333">
    <property type="entry name" value="TGFB_receptor"/>
</dbReference>
<dbReference type="PANTHER" id="PTHR23255:SF69">
    <property type="entry name" value="ACTIVIN RECEPTOR TYPE-1"/>
    <property type="match status" value="1"/>
</dbReference>
<dbReference type="PANTHER" id="PTHR23255">
    <property type="entry name" value="TRANSFORMING GROWTH FACTOR-BETA RECEPTOR TYPE I AND II"/>
    <property type="match status" value="1"/>
</dbReference>
<dbReference type="Pfam" id="PF01064">
    <property type="entry name" value="Activin_recp"/>
    <property type="match status" value="1"/>
</dbReference>
<dbReference type="Pfam" id="PF07714">
    <property type="entry name" value="PK_Tyr_Ser-Thr"/>
    <property type="match status" value="1"/>
</dbReference>
<dbReference type="Pfam" id="PF08515">
    <property type="entry name" value="TGF_beta_GS"/>
    <property type="match status" value="1"/>
</dbReference>
<dbReference type="PRINTS" id="PR00653">
    <property type="entry name" value="ACTIVIN2R"/>
</dbReference>
<dbReference type="SMART" id="SM00467">
    <property type="entry name" value="GS"/>
    <property type="match status" value="1"/>
</dbReference>
<dbReference type="SMART" id="SM00220">
    <property type="entry name" value="S_TKc"/>
    <property type="match status" value="1"/>
</dbReference>
<dbReference type="SUPFAM" id="SSF56112">
    <property type="entry name" value="Protein kinase-like (PK-like)"/>
    <property type="match status" value="1"/>
</dbReference>
<dbReference type="SUPFAM" id="SSF57302">
    <property type="entry name" value="Snake toxin-like"/>
    <property type="match status" value="1"/>
</dbReference>
<dbReference type="PROSITE" id="PS51256">
    <property type="entry name" value="GS"/>
    <property type="match status" value="1"/>
</dbReference>
<dbReference type="PROSITE" id="PS00107">
    <property type="entry name" value="PROTEIN_KINASE_ATP"/>
    <property type="match status" value="1"/>
</dbReference>
<dbReference type="PROSITE" id="PS50011">
    <property type="entry name" value="PROTEIN_KINASE_DOM"/>
    <property type="match status" value="1"/>
</dbReference>
<dbReference type="PROSITE" id="PS00108">
    <property type="entry name" value="PROTEIN_KINASE_ST"/>
    <property type="match status" value="1"/>
</dbReference>
<reference key="1">
    <citation type="submission" date="1995-10" db="EMBL/GenBank/DDBJ databases">
        <authorList>
            <person name="Brames G.P."/>
            <person name="Barnett J.V."/>
        </authorList>
    </citation>
    <scope>NUCLEOTIDE SEQUENCE [MRNA]</scope>
    <source>
        <strain>Leghorn</strain>
        <tissue>Heart</tissue>
    </source>
</reference>
<reference key="2">
    <citation type="submission" date="2002-04" db="EMBL/GenBank/DDBJ databases">
        <authorList>
            <person name="Kuchler K."/>
        </authorList>
    </citation>
    <scope>NUCLEOTIDE SEQUENCE [MRNA]</scope>
    <source>
        <strain>Derco brown</strain>
    </source>
</reference>
<gene>
    <name type="primary">ACVR1</name>
</gene>
<name>ACVR1_CHICK</name>
<comment type="function">
    <text evidence="1">On ligand binding, forms a receptor complex consisting of two type II and two type I transmembrane serine/threonine kinases. Type II receptors phosphorylate and activate type I receptors which autophosphorylate, then bind and activate SMAD transcriptional regulators. Receptor for activin (By similarity).</text>
</comment>
<comment type="catalytic activity">
    <reaction>
        <text>L-threonyl-[receptor-protein] + ATP = O-phospho-L-threonyl-[receptor-protein] + ADP + H(+)</text>
        <dbReference type="Rhea" id="RHEA:44880"/>
        <dbReference type="Rhea" id="RHEA-COMP:11024"/>
        <dbReference type="Rhea" id="RHEA-COMP:11025"/>
        <dbReference type="ChEBI" id="CHEBI:15378"/>
        <dbReference type="ChEBI" id="CHEBI:30013"/>
        <dbReference type="ChEBI" id="CHEBI:30616"/>
        <dbReference type="ChEBI" id="CHEBI:61977"/>
        <dbReference type="ChEBI" id="CHEBI:456216"/>
        <dbReference type="EC" id="2.7.11.30"/>
    </reaction>
</comment>
<comment type="catalytic activity">
    <reaction>
        <text>L-seryl-[receptor-protein] + ATP = O-phospho-L-seryl-[receptor-protein] + ADP + H(+)</text>
        <dbReference type="Rhea" id="RHEA:18673"/>
        <dbReference type="Rhea" id="RHEA-COMP:11022"/>
        <dbReference type="Rhea" id="RHEA-COMP:11023"/>
        <dbReference type="ChEBI" id="CHEBI:15378"/>
        <dbReference type="ChEBI" id="CHEBI:29999"/>
        <dbReference type="ChEBI" id="CHEBI:30616"/>
        <dbReference type="ChEBI" id="CHEBI:83421"/>
        <dbReference type="ChEBI" id="CHEBI:456216"/>
        <dbReference type="EC" id="2.7.11.30"/>
    </reaction>
</comment>
<comment type="cofactor">
    <cofactor evidence="1">
        <name>Mg(2+)</name>
        <dbReference type="ChEBI" id="CHEBI:18420"/>
    </cofactor>
    <cofactor evidence="1">
        <name>Mn(2+)</name>
        <dbReference type="ChEBI" id="CHEBI:29035"/>
    </cofactor>
</comment>
<comment type="subcellular location">
    <subcellularLocation>
        <location evidence="1">Membrane</location>
        <topology evidence="1">Single-pass type I membrane protein</topology>
    </subcellularLocation>
</comment>
<comment type="similarity">
    <text evidence="6">Belongs to the protein kinase superfamily. TKL Ser/Thr protein kinase family. TGFB receptor subfamily.</text>
</comment>
<organism>
    <name type="scientific">Gallus gallus</name>
    <name type="common">Chicken</name>
    <dbReference type="NCBI Taxonomy" id="9031"/>
    <lineage>
        <taxon>Eukaryota</taxon>
        <taxon>Metazoa</taxon>
        <taxon>Chordata</taxon>
        <taxon>Craniata</taxon>
        <taxon>Vertebrata</taxon>
        <taxon>Euteleostomi</taxon>
        <taxon>Archelosauria</taxon>
        <taxon>Archosauria</taxon>
        <taxon>Dinosauria</taxon>
        <taxon>Saurischia</taxon>
        <taxon>Theropoda</taxon>
        <taxon>Coelurosauria</taxon>
        <taxon>Aves</taxon>
        <taxon>Neognathae</taxon>
        <taxon>Galloanserae</taxon>
        <taxon>Galliformes</taxon>
        <taxon>Phasianidae</taxon>
        <taxon>Phasianinae</taxon>
        <taxon>Gallus</taxon>
    </lineage>
</organism>
<accession>Q90ZK6</accession>
<accession>Q9YH45</accession>
<sequence>MALPVLLLLLALPSRSVQDEELKLNECVCEGMSCGNGDRCQGQQCFASLSINDGAKVYQKGCFQVYEQGKMTCKTPPSPDQAVECCQGYLCNMNITAKLPSSKGQTLQGEAAGYSMETLIIVILAPVVVLVIFSVVAVLIIRRIQKNHMERLNSRDAEYGTIEGLIASNVGDSTLADLLDHSCTSGSGSGLPFLVQRTVARQITLVECVGKGRYGEVWRGQWQGENVAVKIFSSRDEKSWFRETELYNTVLLRHENILGFIASDMTSRNSSTQLWLITHYHEMGSLYDYLQLTTLDTVSCLRIVLSIASGLAHLHIEIFGTQGKPAISHRDLKSKNILVKKNGQCCIADLGLAVMHSQSTNQLDVGNNPRVGTKRYMAPEVLDETIQADCFDSYKRVDIWAFGLVLWEVARRMVSNGIVEDYKPPFYDLVPNDPSFEDMRKVVCVDQQRPNIPNRWFSDPTLTSLAKLMKECWYQNPSARLTALRIKKTLTKIDNSLDKLKADC</sequence>
<feature type="signal peptide" evidence="2">
    <location>
        <begin position="1"/>
        <end position="16"/>
    </location>
</feature>
<feature type="chain" id="PRO_0000253593" description="Activin receptor type-1">
    <location>
        <begin position="17"/>
        <end position="504"/>
    </location>
</feature>
<feature type="topological domain" description="Extracellular" evidence="2">
    <location>
        <begin position="17"/>
        <end position="119"/>
    </location>
</feature>
<feature type="transmembrane region" description="Helical" evidence="2">
    <location>
        <begin position="120"/>
        <end position="140"/>
    </location>
</feature>
<feature type="topological domain" description="Cytoplasmic" evidence="2">
    <location>
        <begin position="141"/>
        <end position="504"/>
    </location>
</feature>
<feature type="domain" description="GS" evidence="4">
    <location>
        <begin position="173"/>
        <end position="202"/>
    </location>
</feature>
<feature type="domain" description="Protein kinase" evidence="3">
    <location>
        <begin position="203"/>
        <end position="497"/>
    </location>
</feature>
<feature type="active site" description="Proton acceptor" evidence="3 5">
    <location>
        <position position="331"/>
    </location>
</feature>
<feature type="binding site" evidence="3">
    <location>
        <begin position="209"/>
        <end position="217"/>
    </location>
    <ligand>
        <name>ATP</name>
        <dbReference type="ChEBI" id="CHEBI:30616"/>
    </ligand>
</feature>
<feature type="binding site" evidence="3">
    <location>
        <position position="230"/>
    </location>
    <ligand>
        <name>ATP</name>
        <dbReference type="ChEBI" id="CHEBI:30616"/>
    </ligand>
</feature>
<feature type="glycosylation site" description="N-linked (GlcNAc...) asparagine" evidence="2">
    <location>
        <position position="94"/>
    </location>
</feature>
<feature type="sequence conflict" description="In Ref. 2; AAC98806." evidence="6" ref="2">
    <original>KG</original>
    <variation>SN</variation>
    <location>
        <begin position="211"/>
        <end position="212"/>
    </location>
</feature>
<keyword id="KW-0067">ATP-binding</keyword>
<keyword id="KW-0325">Glycoprotein</keyword>
<keyword id="KW-0418">Kinase</keyword>
<keyword id="KW-0460">Magnesium</keyword>
<keyword id="KW-0464">Manganese</keyword>
<keyword id="KW-0472">Membrane</keyword>
<keyword id="KW-0479">Metal-binding</keyword>
<keyword id="KW-0547">Nucleotide-binding</keyword>
<keyword id="KW-0675">Receptor</keyword>
<keyword id="KW-1185">Reference proteome</keyword>
<keyword id="KW-0723">Serine/threonine-protein kinase</keyword>
<keyword id="KW-0732">Signal</keyword>
<keyword id="KW-0808">Transferase</keyword>
<keyword id="KW-0812">Transmembrane</keyword>
<keyword id="KW-1133">Transmembrane helix</keyword>
<protein>
    <recommendedName>
        <fullName>Activin receptor type-1</fullName>
        <ecNumber>2.7.11.30</ecNumber>
    </recommendedName>
    <alternativeName>
        <fullName>Activin receptor type I</fullName>
    </alternativeName>
    <alternativeName>
        <fullName>Type I TGF B receptor</fullName>
    </alternativeName>
</protein>
<evidence type="ECO:0000250" key="1"/>
<evidence type="ECO:0000255" key="2"/>
<evidence type="ECO:0000255" key="3">
    <source>
        <dbReference type="PROSITE-ProRule" id="PRU00159"/>
    </source>
</evidence>
<evidence type="ECO:0000255" key="4">
    <source>
        <dbReference type="PROSITE-ProRule" id="PRU00585"/>
    </source>
</evidence>
<evidence type="ECO:0000255" key="5">
    <source>
        <dbReference type="PROSITE-ProRule" id="PRU10027"/>
    </source>
</evidence>
<evidence type="ECO:0000305" key="6"/>
<proteinExistence type="evidence at transcript level"/>